<proteinExistence type="inferred from homology"/>
<feature type="initiator methionine" description="Removed" evidence="1">
    <location>
        <position position="1"/>
    </location>
</feature>
<feature type="chain" id="PRO_0000071309" description="Uncharacterized protein L672">
    <location>
        <begin position="2"/>
        <end position="111"/>
    </location>
</feature>
<feature type="lipid moiety-binding region" description="N-myristoyl glycine; by host" evidence="1">
    <location>
        <position position="2"/>
    </location>
</feature>
<organism>
    <name type="scientific">Acanthamoeba polyphaga mimivirus</name>
    <name type="common">APMV</name>
    <dbReference type="NCBI Taxonomy" id="212035"/>
    <lineage>
        <taxon>Viruses</taxon>
        <taxon>Varidnaviria</taxon>
        <taxon>Bamfordvirae</taxon>
        <taxon>Nucleocytoviricota</taxon>
        <taxon>Megaviricetes</taxon>
        <taxon>Imitervirales</taxon>
        <taxon>Mimiviridae</taxon>
        <taxon>Megamimivirinae</taxon>
        <taxon>Mimivirus</taxon>
        <taxon>Mimivirus bradfordmassiliense</taxon>
    </lineage>
</organism>
<sequence length="111" mass="12969">MGNFFSDLFNIKGATNPDSEHHQLRMNCRCGGSATYRCSVKVEHEYLEKFYVDYPFMKQYWHGTLCGSPDEYSFIACEDCIGENQNIFTHYPDGWGENPKFAYHYEKANLI</sequence>
<protein>
    <recommendedName>
        <fullName>Uncharacterized protein L672</fullName>
    </recommendedName>
</protein>
<accession>Q5UNT2</accession>
<organismHost>
    <name type="scientific">Acanthamoeba polyphaga</name>
    <name type="common">Amoeba</name>
    <dbReference type="NCBI Taxonomy" id="5757"/>
</organismHost>
<keyword id="KW-0449">Lipoprotein</keyword>
<keyword id="KW-0519">Myristate</keyword>
<keyword id="KW-1185">Reference proteome</keyword>
<evidence type="ECO:0000255" key="1"/>
<reference key="1">
    <citation type="journal article" date="2004" name="Science">
        <title>The 1.2-megabase genome sequence of Mimivirus.</title>
        <authorList>
            <person name="Raoult D."/>
            <person name="Audic S."/>
            <person name="Robert C."/>
            <person name="Abergel C."/>
            <person name="Renesto P."/>
            <person name="Ogata H."/>
            <person name="La Scola B."/>
            <person name="Susan M."/>
            <person name="Claverie J.-M."/>
        </authorList>
    </citation>
    <scope>NUCLEOTIDE SEQUENCE [LARGE SCALE GENOMIC DNA]</scope>
    <source>
        <strain>Rowbotham-Bradford</strain>
    </source>
</reference>
<gene>
    <name type="ordered locus">MIMI_L672</name>
</gene>
<name>YL672_MIMIV</name>
<dbReference type="EMBL" id="AY653733">
    <property type="protein sequence ID" value="AAV50933.1"/>
    <property type="molecule type" value="Genomic_DNA"/>
</dbReference>
<dbReference type="KEGG" id="vg:9925318"/>
<dbReference type="OrthoDB" id="26616at10239"/>
<dbReference type="Proteomes" id="UP000001134">
    <property type="component" value="Genome"/>
</dbReference>